<protein>
    <recommendedName>
        <fullName>Zinc finger protein 775</fullName>
    </recommendedName>
</protein>
<sequence length="538" mass="60720">MESGLAGSISGDGLARIKQEKPEWLLQTVASQATEKDKENIFQQQSGLPPCQTMGRPRALGSQEETGGTRWAPLPEQDAPLAARVPGTAPGPLSPSLSAGGGHFVCVDCGKRFSWWSSLKIHQRTHTGEKPYLCGKCGKSFSQKPNLVRHQRHHTGERPFCCPECTRRFSQKQHLLKHQKTHSRPATHTCPECERCFRHQVGLRIHQRAHARNRLGARVNLHEMFRYAAARRWSCRLRPGSPRGHPEWVWLGLCRSWWGQHGVRTTAHSRLGPSEQRQFICNDCGKSFTWWSSLNIHQRIHTGERPYACPECGRCFSQKPNLTRHLRNHTGERPHPCSHCGRSFRQKQHLLKHLRTHLPGAQAARCTSCGQSCPSRAALRAHQRVHTAAELLRSQSAVRDGVPGSESQAEIAQSVVVKPQGPQGAKEVLCGQECETLAVPSEQRQFICNECGKSFSWWSALTIHQRIHTGERPYACPDCGRCFSQKPNLTRHRRNHTGERPYLCTACGRGFRQKQHLLKHQRVHRGTQAPHPGPEEEL</sequence>
<reference key="1">
    <citation type="journal article" date="2005" name="Science">
        <title>The transcriptional landscape of the mammalian genome.</title>
        <authorList>
            <person name="Carninci P."/>
            <person name="Kasukawa T."/>
            <person name="Katayama S."/>
            <person name="Gough J."/>
            <person name="Frith M.C."/>
            <person name="Maeda N."/>
            <person name="Oyama R."/>
            <person name="Ravasi T."/>
            <person name="Lenhard B."/>
            <person name="Wells C."/>
            <person name="Kodzius R."/>
            <person name="Shimokawa K."/>
            <person name="Bajic V.B."/>
            <person name="Brenner S.E."/>
            <person name="Batalov S."/>
            <person name="Forrest A.R."/>
            <person name="Zavolan M."/>
            <person name="Davis M.J."/>
            <person name="Wilming L.G."/>
            <person name="Aidinis V."/>
            <person name="Allen J.E."/>
            <person name="Ambesi-Impiombato A."/>
            <person name="Apweiler R."/>
            <person name="Aturaliya R.N."/>
            <person name="Bailey T.L."/>
            <person name="Bansal M."/>
            <person name="Baxter L."/>
            <person name="Beisel K.W."/>
            <person name="Bersano T."/>
            <person name="Bono H."/>
            <person name="Chalk A.M."/>
            <person name="Chiu K.P."/>
            <person name="Choudhary V."/>
            <person name="Christoffels A."/>
            <person name="Clutterbuck D.R."/>
            <person name="Crowe M.L."/>
            <person name="Dalla E."/>
            <person name="Dalrymple B.P."/>
            <person name="de Bono B."/>
            <person name="Della Gatta G."/>
            <person name="di Bernardo D."/>
            <person name="Down T."/>
            <person name="Engstrom P."/>
            <person name="Fagiolini M."/>
            <person name="Faulkner G."/>
            <person name="Fletcher C.F."/>
            <person name="Fukushima T."/>
            <person name="Furuno M."/>
            <person name="Futaki S."/>
            <person name="Gariboldi M."/>
            <person name="Georgii-Hemming P."/>
            <person name="Gingeras T.R."/>
            <person name="Gojobori T."/>
            <person name="Green R.E."/>
            <person name="Gustincich S."/>
            <person name="Harbers M."/>
            <person name="Hayashi Y."/>
            <person name="Hensch T.K."/>
            <person name="Hirokawa N."/>
            <person name="Hill D."/>
            <person name="Huminiecki L."/>
            <person name="Iacono M."/>
            <person name="Ikeo K."/>
            <person name="Iwama A."/>
            <person name="Ishikawa T."/>
            <person name="Jakt M."/>
            <person name="Kanapin A."/>
            <person name="Katoh M."/>
            <person name="Kawasawa Y."/>
            <person name="Kelso J."/>
            <person name="Kitamura H."/>
            <person name="Kitano H."/>
            <person name="Kollias G."/>
            <person name="Krishnan S.P."/>
            <person name="Kruger A."/>
            <person name="Kummerfeld S.K."/>
            <person name="Kurochkin I.V."/>
            <person name="Lareau L.F."/>
            <person name="Lazarevic D."/>
            <person name="Lipovich L."/>
            <person name="Liu J."/>
            <person name="Liuni S."/>
            <person name="McWilliam S."/>
            <person name="Madan Babu M."/>
            <person name="Madera M."/>
            <person name="Marchionni L."/>
            <person name="Matsuda H."/>
            <person name="Matsuzawa S."/>
            <person name="Miki H."/>
            <person name="Mignone F."/>
            <person name="Miyake S."/>
            <person name="Morris K."/>
            <person name="Mottagui-Tabar S."/>
            <person name="Mulder N."/>
            <person name="Nakano N."/>
            <person name="Nakauchi H."/>
            <person name="Ng P."/>
            <person name="Nilsson R."/>
            <person name="Nishiguchi S."/>
            <person name="Nishikawa S."/>
            <person name="Nori F."/>
            <person name="Ohara O."/>
            <person name="Okazaki Y."/>
            <person name="Orlando V."/>
            <person name="Pang K.C."/>
            <person name="Pavan W.J."/>
            <person name="Pavesi G."/>
            <person name="Pesole G."/>
            <person name="Petrovsky N."/>
            <person name="Piazza S."/>
            <person name="Reed J."/>
            <person name="Reid J.F."/>
            <person name="Ring B.Z."/>
            <person name="Ringwald M."/>
            <person name="Rost B."/>
            <person name="Ruan Y."/>
            <person name="Salzberg S.L."/>
            <person name="Sandelin A."/>
            <person name="Schneider C."/>
            <person name="Schoenbach C."/>
            <person name="Sekiguchi K."/>
            <person name="Semple C.A."/>
            <person name="Seno S."/>
            <person name="Sessa L."/>
            <person name="Sheng Y."/>
            <person name="Shibata Y."/>
            <person name="Shimada H."/>
            <person name="Shimada K."/>
            <person name="Silva D."/>
            <person name="Sinclair B."/>
            <person name="Sperling S."/>
            <person name="Stupka E."/>
            <person name="Sugiura K."/>
            <person name="Sultana R."/>
            <person name="Takenaka Y."/>
            <person name="Taki K."/>
            <person name="Tammoja K."/>
            <person name="Tan S.L."/>
            <person name="Tang S."/>
            <person name="Taylor M.S."/>
            <person name="Tegner J."/>
            <person name="Teichmann S.A."/>
            <person name="Ueda H.R."/>
            <person name="van Nimwegen E."/>
            <person name="Verardo R."/>
            <person name="Wei C.L."/>
            <person name="Yagi K."/>
            <person name="Yamanishi H."/>
            <person name="Zabarovsky E."/>
            <person name="Zhu S."/>
            <person name="Zimmer A."/>
            <person name="Hide W."/>
            <person name="Bult C."/>
            <person name="Grimmond S.M."/>
            <person name="Teasdale R.D."/>
            <person name="Liu E.T."/>
            <person name="Brusic V."/>
            <person name="Quackenbush J."/>
            <person name="Wahlestedt C."/>
            <person name="Mattick J.S."/>
            <person name="Hume D.A."/>
            <person name="Kai C."/>
            <person name="Sasaki D."/>
            <person name="Tomaru Y."/>
            <person name="Fukuda S."/>
            <person name="Kanamori-Katayama M."/>
            <person name="Suzuki M."/>
            <person name="Aoki J."/>
            <person name="Arakawa T."/>
            <person name="Iida J."/>
            <person name="Imamura K."/>
            <person name="Itoh M."/>
            <person name="Kato T."/>
            <person name="Kawaji H."/>
            <person name="Kawagashira N."/>
            <person name="Kawashima T."/>
            <person name="Kojima M."/>
            <person name="Kondo S."/>
            <person name="Konno H."/>
            <person name="Nakano K."/>
            <person name="Ninomiya N."/>
            <person name="Nishio T."/>
            <person name="Okada M."/>
            <person name="Plessy C."/>
            <person name="Shibata K."/>
            <person name="Shiraki T."/>
            <person name="Suzuki S."/>
            <person name="Tagami M."/>
            <person name="Waki K."/>
            <person name="Watahiki A."/>
            <person name="Okamura-Oho Y."/>
            <person name="Suzuki H."/>
            <person name="Kawai J."/>
            <person name="Hayashizaki Y."/>
        </authorList>
    </citation>
    <scope>NUCLEOTIDE SEQUENCE [LARGE SCALE MRNA]</scope>
    <source>
        <strain>C57BL/6J</strain>
        <tissue>Egg</tissue>
        <tissue>Head</tissue>
        <tissue>Placenta</tissue>
    </source>
</reference>
<organism>
    <name type="scientific">Mus musculus</name>
    <name type="common">Mouse</name>
    <dbReference type="NCBI Taxonomy" id="10090"/>
    <lineage>
        <taxon>Eukaryota</taxon>
        <taxon>Metazoa</taxon>
        <taxon>Chordata</taxon>
        <taxon>Craniata</taxon>
        <taxon>Vertebrata</taxon>
        <taxon>Euteleostomi</taxon>
        <taxon>Mammalia</taxon>
        <taxon>Eutheria</taxon>
        <taxon>Euarchontoglires</taxon>
        <taxon>Glires</taxon>
        <taxon>Rodentia</taxon>
        <taxon>Myomorpha</taxon>
        <taxon>Muroidea</taxon>
        <taxon>Muridae</taxon>
        <taxon>Murinae</taxon>
        <taxon>Mus</taxon>
        <taxon>Mus</taxon>
    </lineage>
</organism>
<keyword id="KW-0238">DNA-binding</keyword>
<keyword id="KW-0479">Metal-binding</keyword>
<keyword id="KW-0539">Nucleus</keyword>
<keyword id="KW-1185">Reference proteome</keyword>
<keyword id="KW-0677">Repeat</keyword>
<keyword id="KW-0804">Transcription</keyword>
<keyword id="KW-0805">Transcription regulation</keyword>
<keyword id="KW-0862">Zinc</keyword>
<keyword id="KW-0863">Zinc-finger</keyword>
<accession>Q8BI73</accession>
<proteinExistence type="evidence at transcript level"/>
<evidence type="ECO:0000255" key="1">
    <source>
        <dbReference type="PROSITE-ProRule" id="PRU00042"/>
    </source>
</evidence>
<evidence type="ECO:0000256" key="2">
    <source>
        <dbReference type="SAM" id="MobiDB-lite"/>
    </source>
</evidence>
<evidence type="ECO:0000305" key="3"/>
<gene>
    <name type="primary">Znf775</name>
    <name type="synonym">Zfp775</name>
</gene>
<comment type="function">
    <text>May be involved in transcriptional regulation.</text>
</comment>
<comment type="subcellular location">
    <subcellularLocation>
        <location evidence="3">Nucleus</location>
    </subcellularLocation>
</comment>
<comment type="similarity">
    <text evidence="3">Belongs to the krueppel C2H2-type zinc-finger protein family.</text>
</comment>
<feature type="chain" id="PRO_0000280442" description="Zinc finger protein 775">
    <location>
        <begin position="1"/>
        <end position="538"/>
    </location>
</feature>
<feature type="zinc finger region" description="C2H2-type 1" evidence="1">
    <location>
        <begin position="104"/>
        <end position="126"/>
    </location>
</feature>
<feature type="zinc finger region" description="C2H2-type 2" evidence="1">
    <location>
        <begin position="132"/>
        <end position="154"/>
    </location>
</feature>
<feature type="zinc finger region" description="C2H2-type 3" evidence="1">
    <location>
        <begin position="160"/>
        <end position="182"/>
    </location>
</feature>
<feature type="zinc finger region" description="C2H2-type 4" evidence="1">
    <location>
        <begin position="188"/>
        <end position="210"/>
    </location>
</feature>
<feature type="zinc finger region" description="C2H2-type 5" evidence="1">
    <location>
        <begin position="279"/>
        <end position="301"/>
    </location>
</feature>
<feature type="zinc finger region" description="C2H2-type 6" evidence="1">
    <location>
        <begin position="307"/>
        <end position="329"/>
    </location>
</feature>
<feature type="zinc finger region" description="C2H2-type 7" evidence="1">
    <location>
        <begin position="335"/>
        <end position="357"/>
    </location>
</feature>
<feature type="zinc finger region" description="C2H2-type 8" evidence="1">
    <location>
        <begin position="364"/>
        <end position="386"/>
    </location>
</feature>
<feature type="zinc finger region" description="C2H2-type 9" evidence="1">
    <location>
        <begin position="446"/>
        <end position="468"/>
    </location>
</feature>
<feature type="zinc finger region" description="C2H2-type 10" evidence="1">
    <location>
        <begin position="474"/>
        <end position="496"/>
    </location>
</feature>
<feature type="zinc finger region" description="C2H2-type 11" evidence="1">
    <location>
        <begin position="502"/>
        <end position="524"/>
    </location>
</feature>
<feature type="region of interest" description="Disordered" evidence="2">
    <location>
        <begin position="35"/>
        <end position="73"/>
    </location>
</feature>
<name>ZN775_MOUSE</name>
<dbReference type="EMBL" id="AK048054">
    <property type="protein sequence ID" value="BAC33226.1"/>
    <property type="molecule type" value="mRNA"/>
</dbReference>
<dbReference type="EMBL" id="AK167452">
    <property type="protein sequence ID" value="BAE39538.1"/>
    <property type="molecule type" value="mRNA"/>
</dbReference>
<dbReference type="EMBL" id="AK163249">
    <property type="protein sequence ID" value="BAE37256.1"/>
    <property type="molecule type" value="mRNA"/>
</dbReference>
<dbReference type="CCDS" id="CCDS20107.1"/>
<dbReference type="RefSeq" id="NP_775605.1">
    <property type="nucleotide sequence ID" value="NM_173429.2"/>
</dbReference>
<dbReference type="RefSeq" id="XP_006506141.1">
    <property type="nucleotide sequence ID" value="XM_006506078.3"/>
</dbReference>
<dbReference type="SMR" id="Q8BI73"/>
<dbReference type="FunCoup" id="Q8BI73">
    <property type="interactions" value="35"/>
</dbReference>
<dbReference type="STRING" id="10090.ENSMUSP00000145192"/>
<dbReference type="PhosphoSitePlus" id="Q8BI73"/>
<dbReference type="SwissPalm" id="Q8BI73"/>
<dbReference type="PaxDb" id="10090-ENSMUSP00000056290"/>
<dbReference type="ProteomicsDB" id="275093"/>
<dbReference type="DNASU" id="243372"/>
<dbReference type="Ensembl" id="ENSMUST00000061720.5">
    <property type="protein sequence ID" value="ENSMUSP00000056290.4"/>
    <property type="gene ID" value="ENSMUSG00000007216.7"/>
</dbReference>
<dbReference type="Ensembl" id="ENSMUST00000204095.3">
    <property type="protein sequence ID" value="ENSMUSP00000145192.2"/>
    <property type="gene ID" value="ENSMUSG00000007216.7"/>
</dbReference>
<dbReference type="GeneID" id="243372"/>
<dbReference type="KEGG" id="mmu:243372"/>
<dbReference type="UCSC" id="uc009bvb.1">
    <property type="organism name" value="mouse"/>
</dbReference>
<dbReference type="AGR" id="MGI:2683557"/>
<dbReference type="CTD" id="243372"/>
<dbReference type="MGI" id="MGI:2683557">
    <property type="gene designation" value="Zfp775"/>
</dbReference>
<dbReference type="VEuPathDB" id="HostDB:ENSMUSG00000007216"/>
<dbReference type="eggNOG" id="KOG1721">
    <property type="taxonomic scope" value="Eukaryota"/>
</dbReference>
<dbReference type="GeneTree" id="ENSGT01130000278268"/>
<dbReference type="HOGENOM" id="CLU_002678_78_0_1"/>
<dbReference type="InParanoid" id="Q8BI73"/>
<dbReference type="OMA" id="GGWEEAQ"/>
<dbReference type="OrthoDB" id="10004641at2759"/>
<dbReference type="PhylomeDB" id="Q8BI73"/>
<dbReference type="TreeFam" id="TF350922"/>
<dbReference type="Reactome" id="R-MMU-212436">
    <property type="pathway name" value="Generic Transcription Pathway"/>
</dbReference>
<dbReference type="BioGRID-ORCS" id="243372">
    <property type="hits" value="2 hits in 76 CRISPR screens"/>
</dbReference>
<dbReference type="ChiTaRS" id="Zfp775">
    <property type="organism name" value="mouse"/>
</dbReference>
<dbReference type="PRO" id="PR:Q8BI73"/>
<dbReference type="Proteomes" id="UP000000589">
    <property type="component" value="Chromosome 6"/>
</dbReference>
<dbReference type="RNAct" id="Q8BI73">
    <property type="molecule type" value="protein"/>
</dbReference>
<dbReference type="Bgee" id="ENSMUSG00000007216">
    <property type="expression patterns" value="Expressed in cleaving embryo and 206 other cell types or tissues"/>
</dbReference>
<dbReference type="ExpressionAtlas" id="Q8BI73">
    <property type="expression patterns" value="baseline and differential"/>
</dbReference>
<dbReference type="GO" id="GO:0005634">
    <property type="term" value="C:nucleus"/>
    <property type="evidence" value="ECO:0007669"/>
    <property type="project" value="UniProtKB-SubCell"/>
</dbReference>
<dbReference type="GO" id="GO:0003677">
    <property type="term" value="F:DNA binding"/>
    <property type="evidence" value="ECO:0007669"/>
    <property type="project" value="UniProtKB-KW"/>
</dbReference>
<dbReference type="GO" id="GO:0008270">
    <property type="term" value="F:zinc ion binding"/>
    <property type="evidence" value="ECO:0007669"/>
    <property type="project" value="UniProtKB-KW"/>
</dbReference>
<dbReference type="FunFam" id="3.30.160.60:FF:000295">
    <property type="entry name" value="zinc finger protein 19"/>
    <property type="match status" value="1"/>
</dbReference>
<dbReference type="FunFam" id="3.30.160.60:FF:002343">
    <property type="entry name" value="Zinc finger protein 33A"/>
    <property type="match status" value="2"/>
</dbReference>
<dbReference type="FunFam" id="3.30.160.60:FF:000191">
    <property type="entry name" value="zinc finger protein 366"/>
    <property type="match status" value="1"/>
</dbReference>
<dbReference type="FunFam" id="3.30.160.60:FF:000979">
    <property type="entry name" value="Zinc finger protein 775"/>
    <property type="match status" value="3"/>
</dbReference>
<dbReference type="FunFam" id="3.30.160.60:FF:000530">
    <property type="entry name" value="zinc finger protein 775"/>
    <property type="match status" value="2"/>
</dbReference>
<dbReference type="Gene3D" id="3.30.160.60">
    <property type="entry name" value="Classic Zinc Finger"/>
    <property type="match status" value="9"/>
</dbReference>
<dbReference type="InterPro" id="IPR050636">
    <property type="entry name" value="C2H2-ZF_domain-containing"/>
</dbReference>
<dbReference type="InterPro" id="IPR036236">
    <property type="entry name" value="Znf_C2H2_sf"/>
</dbReference>
<dbReference type="InterPro" id="IPR013087">
    <property type="entry name" value="Znf_C2H2_type"/>
</dbReference>
<dbReference type="PANTHER" id="PTHR47772:SF8">
    <property type="entry name" value="C2H2-TYPE DOMAIN-CONTAINING PROTEIN"/>
    <property type="match status" value="1"/>
</dbReference>
<dbReference type="PANTHER" id="PTHR47772">
    <property type="entry name" value="ZINC FINGER PROTEIN 200"/>
    <property type="match status" value="1"/>
</dbReference>
<dbReference type="Pfam" id="PF00096">
    <property type="entry name" value="zf-C2H2"/>
    <property type="match status" value="11"/>
</dbReference>
<dbReference type="SMART" id="SM00355">
    <property type="entry name" value="ZnF_C2H2"/>
    <property type="match status" value="11"/>
</dbReference>
<dbReference type="SUPFAM" id="SSF57667">
    <property type="entry name" value="beta-beta-alpha zinc fingers"/>
    <property type="match status" value="7"/>
</dbReference>
<dbReference type="PROSITE" id="PS00028">
    <property type="entry name" value="ZINC_FINGER_C2H2_1"/>
    <property type="match status" value="11"/>
</dbReference>
<dbReference type="PROSITE" id="PS50157">
    <property type="entry name" value="ZINC_FINGER_C2H2_2"/>
    <property type="match status" value="11"/>
</dbReference>